<feature type="chain" id="PRO_1000100283" description="Dihydroorotate dehydrogenase (quinone)">
    <location>
        <begin position="1"/>
        <end position="336"/>
    </location>
</feature>
<feature type="active site" description="Nucleophile" evidence="1">
    <location>
        <position position="175"/>
    </location>
</feature>
<feature type="binding site" evidence="1">
    <location>
        <begin position="62"/>
        <end position="66"/>
    </location>
    <ligand>
        <name>FMN</name>
        <dbReference type="ChEBI" id="CHEBI:58210"/>
    </ligand>
</feature>
<feature type="binding site" evidence="1">
    <location>
        <position position="66"/>
    </location>
    <ligand>
        <name>substrate</name>
    </ligand>
</feature>
<feature type="binding site" evidence="1">
    <location>
        <position position="86"/>
    </location>
    <ligand>
        <name>FMN</name>
        <dbReference type="ChEBI" id="CHEBI:58210"/>
    </ligand>
</feature>
<feature type="binding site" evidence="1">
    <location>
        <begin position="111"/>
        <end position="115"/>
    </location>
    <ligand>
        <name>substrate</name>
    </ligand>
</feature>
<feature type="binding site" evidence="1">
    <location>
        <position position="139"/>
    </location>
    <ligand>
        <name>FMN</name>
        <dbReference type="ChEBI" id="CHEBI:58210"/>
    </ligand>
</feature>
<feature type="binding site" evidence="1">
    <location>
        <position position="172"/>
    </location>
    <ligand>
        <name>FMN</name>
        <dbReference type="ChEBI" id="CHEBI:58210"/>
    </ligand>
</feature>
<feature type="binding site" evidence="1">
    <location>
        <position position="172"/>
    </location>
    <ligand>
        <name>substrate</name>
    </ligand>
</feature>
<feature type="binding site" evidence="1">
    <location>
        <position position="177"/>
    </location>
    <ligand>
        <name>substrate</name>
    </ligand>
</feature>
<feature type="binding site" evidence="1">
    <location>
        <position position="217"/>
    </location>
    <ligand>
        <name>FMN</name>
        <dbReference type="ChEBI" id="CHEBI:58210"/>
    </ligand>
</feature>
<feature type="binding site" evidence="1">
    <location>
        <position position="245"/>
    </location>
    <ligand>
        <name>FMN</name>
        <dbReference type="ChEBI" id="CHEBI:58210"/>
    </ligand>
</feature>
<feature type="binding site" evidence="1">
    <location>
        <begin position="246"/>
        <end position="247"/>
    </location>
    <ligand>
        <name>substrate</name>
    </ligand>
</feature>
<feature type="binding site" evidence="1">
    <location>
        <position position="268"/>
    </location>
    <ligand>
        <name>FMN</name>
        <dbReference type="ChEBI" id="CHEBI:58210"/>
    </ligand>
</feature>
<feature type="binding site" evidence="1">
    <location>
        <position position="297"/>
    </location>
    <ligand>
        <name>FMN</name>
        <dbReference type="ChEBI" id="CHEBI:58210"/>
    </ligand>
</feature>
<feature type="binding site" evidence="1">
    <location>
        <begin position="318"/>
        <end position="319"/>
    </location>
    <ligand>
        <name>FMN</name>
        <dbReference type="ChEBI" id="CHEBI:58210"/>
    </ligand>
</feature>
<gene>
    <name evidence="1" type="primary">pyrD</name>
    <name type="ordered locus">SEN0923</name>
</gene>
<name>PYRD_SALEP</name>
<accession>B5QZE8</accession>
<dbReference type="EC" id="1.3.5.2" evidence="1"/>
<dbReference type="EMBL" id="AM933172">
    <property type="protein sequence ID" value="CAR32506.1"/>
    <property type="molecule type" value="Genomic_DNA"/>
</dbReference>
<dbReference type="RefSeq" id="WP_000291723.1">
    <property type="nucleotide sequence ID" value="NC_011294.1"/>
</dbReference>
<dbReference type="SMR" id="B5QZE8"/>
<dbReference type="KEGG" id="set:SEN0923"/>
<dbReference type="HOGENOM" id="CLU_013640_2_0_6"/>
<dbReference type="UniPathway" id="UPA00070">
    <property type="reaction ID" value="UER00946"/>
</dbReference>
<dbReference type="Proteomes" id="UP000000613">
    <property type="component" value="Chromosome"/>
</dbReference>
<dbReference type="GO" id="GO:0005737">
    <property type="term" value="C:cytoplasm"/>
    <property type="evidence" value="ECO:0007669"/>
    <property type="project" value="InterPro"/>
</dbReference>
<dbReference type="GO" id="GO:0005886">
    <property type="term" value="C:plasma membrane"/>
    <property type="evidence" value="ECO:0007669"/>
    <property type="project" value="UniProtKB-SubCell"/>
</dbReference>
<dbReference type="GO" id="GO:0106430">
    <property type="term" value="F:dihydroorotate dehydrogenase (quinone) activity"/>
    <property type="evidence" value="ECO:0007669"/>
    <property type="project" value="UniProtKB-EC"/>
</dbReference>
<dbReference type="GO" id="GO:0006207">
    <property type="term" value="P:'de novo' pyrimidine nucleobase biosynthetic process"/>
    <property type="evidence" value="ECO:0007669"/>
    <property type="project" value="InterPro"/>
</dbReference>
<dbReference type="GO" id="GO:0044205">
    <property type="term" value="P:'de novo' UMP biosynthetic process"/>
    <property type="evidence" value="ECO:0007669"/>
    <property type="project" value="UniProtKB-UniRule"/>
</dbReference>
<dbReference type="CDD" id="cd04738">
    <property type="entry name" value="DHOD_2_like"/>
    <property type="match status" value="1"/>
</dbReference>
<dbReference type="FunFam" id="3.20.20.70:FF:000028">
    <property type="entry name" value="Dihydroorotate dehydrogenase (quinone)"/>
    <property type="match status" value="1"/>
</dbReference>
<dbReference type="Gene3D" id="3.20.20.70">
    <property type="entry name" value="Aldolase class I"/>
    <property type="match status" value="1"/>
</dbReference>
<dbReference type="HAMAP" id="MF_00225">
    <property type="entry name" value="DHO_dh_type2"/>
    <property type="match status" value="1"/>
</dbReference>
<dbReference type="InterPro" id="IPR013785">
    <property type="entry name" value="Aldolase_TIM"/>
</dbReference>
<dbReference type="InterPro" id="IPR050074">
    <property type="entry name" value="DHO_dehydrogenase"/>
</dbReference>
<dbReference type="InterPro" id="IPR012135">
    <property type="entry name" value="Dihydroorotate_DH_1_2"/>
</dbReference>
<dbReference type="InterPro" id="IPR005719">
    <property type="entry name" value="Dihydroorotate_DH_2"/>
</dbReference>
<dbReference type="InterPro" id="IPR005720">
    <property type="entry name" value="Dihydroorotate_DH_cat"/>
</dbReference>
<dbReference type="InterPro" id="IPR001295">
    <property type="entry name" value="Dihydroorotate_DH_CS"/>
</dbReference>
<dbReference type="NCBIfam" id="NF003644">
    <property type="entry name" value="PRK05286.1-1"/>
    <property type="match status" value="1"/>
</dbReference>
<dbReference type="NCBIfam" id="NF003645">
    <property type="entry name" value="PRK05286.1-2"/>
    <property type="match status" value="1"/>
</dbReference>
<dbReference type="NCBIfam" id="NF003646">
    <property type="entry name" value="PRK05286.1-4"/>
    <property type="match status" value="1"/>
</dbReference>
<dbReference type="NCBIfam" id="NF003652">
    <property type="entry name" value="PRK05286.2-5"/>
    <property type="match status" value="1"/>
</dbReference>
<dbReference type="NCBIfam" id="TIGR01036">
    <property type="entry name" value="pyrD_sub2"/>
    <property type="match status" value="1"/>
</dbReference>
<dbReference type="PANTHER" id="PTHR48109:SF4">
    <property type="entry name" value="DIHYDROOROTATE DEHYDROGENASE (QUINONE), MITOCHONDRIAL"/>
    <property type="match status" value="1"/>
</dbReference>
<dbReference type="PANTHER" id="PTHR48109">
    <property type="entry name" value="DIHYDROOROTATE DEHYDROGENASE (QUINONE), MITOCHONDRIAL-RELATED"/>
    <property type="match status" value="1"/>
</dbReference>
<dbReference type="Pfam" id="PF01180">
    <property type="entry name" value="DHO_dh"/>
    <property type="match status" value="1"/>
</dbReference>
<dbReference type="PIRSF" id="PIRSF000164">
    <property type="entry name" value="DHO_oxidase"/>
    <property type="match status" value="1"/>
</dbReference>
<dbReference type="SUPFAM" id="SSF51395">
    <property type="entry name" value="FMN-linked oxidoreductases"/>
    <property type="match status" value="1"/>
</dbReference>
<dbReference type="PROSITE" id="PS00911">
    <property type="entry name" value="DHODEHASE_1"/>
    <property type="match status" value="1"/>
</dbReference>
<dbReference type="PROSITE" id="PS00912">
    <property type="entry name" value="DHODEHASE_2"/>
    <property type="match status" value="1"/>
</dbReference>
<protein>
    <recommendedName>
        <fullName evidence="1">Dihydroorotate dehydrogenase (quinone)</fullName>
        <ecNumber evidence="1">1.3.5.2</ecNumber>
    </recommendedName>
    <alternativeName>
        <fullName evidence="1">DHOdehase</fullName>
        <shortName evidence="1">DHOD</shortName>
        <shortName evidence="1">DHODase</shortName>
    </alternativeName>
    <alternativeName>
        <fullName evidence="1">Dihydroorotate oxidase</fullName>
    </alternativeName>
</protein>
<proteinExistence type="inferred from homology"/>
<organism>
    <name type="scientific">Salmonella enteritidis PT4 (strain P125109)</name>
    <dbReference type="NCBI Taxonomy" id="550537"/>
    <lineage>
        <taxon>Bacteria</taxon>
        <taxon>Pseudomonadati</taxon>
        <taxon>Pseudomonadota</taxon>
        <taxon>Gammaproteobacteria</taxon>
        <taxon>Enterobacterales</taxon>
        <taxon>Enterobacteriaceae</taxon>
        <taxon>Salmonella</taxon>
    </lineage>
</organism>
<sequence>MYYPFVRKALFQLDPERAHEFTFQQLRRITGTPLEALVRQKVPTKPVTCMGLTFKNPLGLAAGLDKDGECIDALGAMGFGSLEIGTVTPRPQPGNDKPRLFRLVDAEGLINRMGFNNLGVDNLVENVKKAHFDGILGINIGKNKDTPVENGKDDYLICMEKVYAYAGYIAINISSPNTPGLRTLQYGDALDDLLTAIKNKQNDLQAIHHKYVPVAVKIAPDLCEEELIQVADSLLRHNIDGVIATNTTLDRSLVQGMKNCQQTGGLSGRPLQLKSTEIIRRLSQELKGQLPIIGVGGIDSVIAAREKIAAGATLVQIYSGFIFKGPPLIKEIVTHI</sequence>
<reference key="1">
    <citation type="journal article" date="2008" name="Genome Res.">
        <title>Comparative genome analysis of Salmonella enteritidis PT4 and Salmonella gallinarum 287/91 provides insights into evolutionary and host adaptation pathways.</title>
        <authorList>
            <person name="Thomson N.R."/>
            <person name="Clayton D.J."/>
            <person name="Windhorst D."/>
            <person name="Vernikos G."/>
            <person name="Davidson S."/>
            <person name="Churcher C."/>
            <person name="Quail M.A."/>
            <person name="Stevens M."/>
            <person name="Jones M.A."/>
            <person name="Watson M."/>
            <person name="Barron A."/>
            <person name="Layton A."/>
            <person name="Pickard D."/>
            <person name="Kingsley R.A."/>
            <person name="Bignell A."/>
            <person name="Clark L."/>
            <person name="Harris B."/>
            <person name="Ormond D."/>
            <person name="Abdellah Z."/>
            <person name="Brooks K."/>
            <person name="Cherevach I."/>
            <person name="Chillingworth T."/>
            <person name="Woodward J."/>
            <person name="Norberczak H."/>
            <person name="Lord A."/>
            <person name="Arrowsmith C."/>
            <person name="Jagels K."/>
            <person name="Moule S."/>
            <person name="Mungall K."/>
            <person name="Saunders M."/>
            <person name="Whitehead S."/>
            <person name="Chabalgoity J.A."/>
            <person name="Maskell D."/>
            <person name="Humphreys T."/>
            <person name="Roberts M."/>
            <person name="Barrow P.A."/>
            <person name="Dougan G."/>
            <person name="Parkhill J."/>
        </authorList>
    </citation>
    <scope>NUCLEOTIDE SEQUENCE [LARGE SCALE GENOMIC DNA]</scope>
    <source>
        <strain>P125109</strain>
    </source>
</reference>
<comment type="function">
    <text evidence="1">Catalyzes the conversion of dihydroorotate to orotate with quinone as electron acceptor.</text>
</comment>
<comment type="catalytic activity">
    <reaction evidence="1">
        <text>(S)-dihydroorotate + a quinone = orotate + a quinol</text>
        <dbReference type="Rhea" id="RHEA:30187"/>
        <dbReference type="ChEBI" id="CHEBI:24646"/>
        <dbReference type="ChEBI" id="CHEBI:30839"/>
        <dbReference type="ChEBI" id="CHEBI:30864"/>
        <dbReference type="ChEBI" id="CHEBI:132124"/>
        <dbReference type="EC" id="1.3.5.2"/>
    </reaction>
</comment>
<comment type="cofactor">
    <cofactor evidence="1">
        <name>FMN</name>
        <dbReference type="ChEBI" id="CHEBI:58210"/>
    </cofactor>
    <text evidence="1">Binds 1 FMN per subunit.</text>
</comment>
<comment type="pathway">
    <text evidence="1">Pyrimidine metabolism; UMP biosynthesis via de novo pathway; orotate from (S)-dihydroorotate (quinone route): step 1/1.</text>
</comment>
<comment type="subunit">
    <text evidence="1">Monomer.</text>
</comment>
<comment type="subcellular location">
    <subcellularLocation>
        <location evidence="1">Cell membrane</location>
        <topology evidence="1">Peripheral membrane protein</topology>
    </subcellularLocation>
</comment>
<comment type="similarity">
    <text evidence="1">Belongs to the dihydroorotate dehydrogenase family. Type 2 subfamily.</text>
</comment>
<keyword id="KW-1003">Cell membrane</keyword>
<keyword id="KW-0285">Flavoprotein</keyword>
<keyword id="KW-0288">FMN</keyword>
<keyword id="KW-0472">Membrane</keyword>
<keyword id="KW-0560">Oxidoreductase</keyword>
<keyword id="KW-0665">Pyrimidine biosynthesis</keyword>
<evidence type="ECO:0000255" key="1">
    <source>
        <dbReference type="HAMAP-Rule" id="MF_00225"/>
    </source>
</evidence>